<proteinExistence type="inferred from homology"/>
<gene>
    <name type="primary">A9</name>
</gene>
<keyword id="KW-1043">Host membrane</keyword>
<keyword id="KW-0945">Host-virus interaction</keyword>
<keyword id="KW-1081">Inhibition of host apoptosis by viral BCL2-like protein</keyword>
<keyword id="KW-0472">Membrane</keyword>
<keyword id="KW-1119">Modulation of host cell apoptosis by virus</keyword>
<keyword id="KW-1185">Reference proteome</keyword>
<keyword id="KW-0812">Transmembrane</keyword>
<keyword id="KW-1133">Transmembrane helix</keyword>
<protein>
    <recommendedName>
        <fullName>Putative apoptosis regulator A9</fullName>
    </recommendedName>
</protein>
<reference key="1">
    <citation type="journal article" date="1997" name="J. Virol.">
        <title>Primary structure of the alcelaphine herpesvirus 1 genome.</title>
        <authorList>
            <person name="Ensser A."/>
            <person name="Pflanz R."/>
            <person name="Fleckenstein B."/>
        </authorList>
    </citation>
    <scope>NUCLEOTIDE SEQUENCE [LARGE SCALE GENOMIC DNA]</scope>
</reference>
<comment type="function">
    <text evidence="1">Suppresses apoptosis in host cell and thus facilitates production of progeny virions.</text>
</comment>
<comment type="subcellular location">
    <subcellularLocation>
        <location evidence="3">Host membrane</location>
        <topology evidence="3">Single-pass membrane protein</topology>
    </subcellularLocation>
</comment>
<organism>
    <name type="scientific">Alcelaphine herpesvirus 1 (strain C500)</name>
    <name type="common">AlHV-1</name>
    <name type="synonym">Malignant catarrhal fever virus</name>
    <dbReference type="NCBI Taxonomy" id="654901"/>
    <lineage>
        <taxon>Viruses</taxon>
        <taxon>Duplodnaviria</taxon>
        <taxon>Heunggongvirae</taxon>
        <taxon>Peploviricota</taxon>
        <taxon>Herviviricetes</taxon>
        <taxon>Herpesvirales</taxon>
        <taxon>Orthoherpesviridae</taxon>
        <taxon>Gammaherpesvirinae</taxon>
        <taxon>Macavirus</taxon>
        <taxon>Macavirus alcelaphinegamma1</taxon>
    </lineage>
</organism>
<organismHost>
    <name type="scientific">Connochaetes taurinus</name>
    <name type="common">Blue wildebeest</name>
    <dbReference type="NCBI Taxonomy" id="9927"/>
</organismHost>
<evidence type="ECO:0000250" key="1"/>
<evidence type="ECO:0000255" key="2"/>
<evidence type="ECO:0000305" key="3"/>
<sequence>MKMLGEPEFKENILYYSFLNELFLILIRNGFSCSHAKLILDETRKRGLECSGQFEVISNSVEAPEPESLERIAKTLFTPRPHWGRLVAFLAYLAYLQKNSTEKLFWNDHLKKLKQIVKCHIVPWTLGPRDPKPKQRPFDKLPSAFYFLTAAASCLTLLLLYFRTTQTK</sequence>
<accession>O36423</accession>
<name>VGA9_ALHV1</name>
<feature type="chain" id="PRO_0000405773" description="Putative apoptosis regulator A9">
    <location>
        <begin position="1"/>
        <end position="168"/>
    </location>
</feature>
<feature type="transmembrane region" description="Helical" evidence="2">
    <location>
        <begin position="143"/>
        <end position="162"/>
    </location>
</feature>
<dbReference type="EMBL" id="AF005370">
    <property type="protein sequence ID" value="AAC58120.1"/>
    <property type="molecule type" value="Genomic_DNA"/>
</dbReference>
<dbReference type="PIR" id="T03168">
    <property type="entry name" value="T03168"/>
</dbReference>
<dbReference type="RefSeq" id="NP_065572.1">
    <property type="nucleotide sequence ID" value="NC_002531.1"/>
</dbReference>
<dbReference type="SMR" id="O36423"/>
<dbReference type="KEGG" id="vg:911775"/>
<dbReference type="Proteomes" id="UP000000941">
    <property type="component" value="Segment"/>
</dbReference>
<dbReference type="GO" id="GO:0033644">
    <property type="term" value="C:host cell membrane"/>
    <property type="evidence" value="ECO:0007669"/>
    <property type="project" value="UniProtKB-SubCell"/>
</dbReference>
<dbReference type="GO" id="GO:0016020">
    <property type="term" value="C:membrane"/>
    <property type="evidence" value="ECO:0007669"/>
    <property type="project" value="UniProtKB-KW"/>
</dbReference>
<dbReference type="GO" id="GO:0042981">
    <property type="term" value="P:regulation of apoptotic process"/>
    <property type="evidence" value="ECO:0007669"/>
    <property type="project" value="InterPro"/>
</dbReference>
<dbReference type="GO" id="GO:0033668">
    <property type="term" value="P:symbiont-mediated suppression of host apoptosis"/>
    <property type="evidence" value="ECO:0007669"/>
    <property type="project" value="UniProtKB-KW"/>
</dbReference>
<dbReference type="InterPro" id="IPR036834">
    <property type="entry name" value="Bcl-2-like_sf"/>
</dbReference>
<dbReference type="SUPFAM" id="SSF56854">
    <property type="entry name" value="Bcl-2 inhibitors of programmed cell death"/>
    <property type="match status" value="1"/>
</dbReference>